<evidence type="ECO:0000255" key="1">
    <source>
        <dbReference type="HAMAP-Rule" id="MF_03058"/>
    </source>
</evidence>
<keyword id="KW-0968">Cytoplasmic vesicle</keyword>
<keyword id="KW-0256">Endoplasmic reticulum</keyword>
<keyword id="KW-0472">Membrane</keyword>
<keyword id="KW-1185">Reference proteome</keyword>
<keyword id="KW-0812">Transmembrane</keyword>
<keyword id="KW-1133">Transmembrane helix</keyword>
<comment type="function">
    <text evidence="1">Required for the assembly of the V0 complex of the vacuolar ATPase (V-ATPase) in the endoplasmic reticulum.</text>
</comment>
<comment type="subcellular location">
    <subcellularLocation>
        <location evidence="1">Endoplasmic reticulum membrane</location>
        <topology evidence="1">Multi-pass membrane protein</topology>
    </subcellularLocation>
    <subcellularLocation>
        <location evidence="1">Endoplasmic reticulum-Golgi intermediate compartment membrane</location>
        <topology evidence="1">Multi-pass membrane protein</topology>
    </subcellularLocation>
    <subcellularLocation>
        <location evidence="1">Cytoplasmic vesicle</location>
        <location evidence="1">COPII-coated vesicle membrane</location>
        <topology evidence="1">Multi-pass membrane protein</topology>
    </subcellularLocation>
</comment>
<comment type="similarity">
    <text evidence="1">Belongs to the VMA21 family.</text>
</comment>
<reference key="1">
    <citation type="submission" date="2006-10" db="EMBL/GenBank/DDBJ databases">
        <authorList>
            <consortium name="Sanger Xenopus tropicalis EST/cDNA project"/>
        </authorList>
    </citation>
    <scope>NUCLEOTIDE SEQUENCE [LARGE SCALE MRNA]</scope>
    <source>
        <tissue>Egg</tissue>
    </source>
</reference>
<reference key="2">
    <citation type="submission" date="2008-02" db="EMBL/GenBank/DDBJ databases">
        <authorList>
            <consortium name="NIH - Xenopus Gene Collection (XGC) project"/>
        </authorList>
    </citation>
    <scope>NUCLEOTIDE SEQUENCE [LARGE SCALE MRNA]</scope>
    <source>
        <tissue>Gastrula</tissue>
    </source>
</reference>
<proteinExistence type="inferred from homology"/>
<name>VMA21_XENTR</name>
<gene>
    <name type="primary">vma21</name>
    <name type="ORF">TEgg133e08.1</name>
</gene>
<sequence>MERYDKASLNAANVPLPEFSQNEGSLVATLKTLLFFTVLMIMLPIGLYFSSKVYVFEGTYGMSNRDSYFYAAIVAVVAVHVVLAMFVYVAWNEGSRQWREGKQD</sequence>
<dbReference type="EMBL" id="CR761257">
    <property type="protein sequence ID" value="CAJ82059.1"/>
    <property type="molecule type" value="mRNA"/>
</dbReference>
<dbReference type="EMBL" id="BC159038">
    <property type="protein sequence ID" value="AAI59039.1"/>
    <property type="molecule type" value="mRNA"/>
</dbReference>
<dbReference type="RefSeq" id="NP_001037928.1">
    <property type="nucleotide sequence ID" value="NM_001044463.1"/>
</dbReference>
<dbReference type="SMR" id="Q28GR4"/>
<dbReference type="FunCoup" id="Q28GR4">
    <property type="interactions" value="1222"/>
</dbReference>
<dbReference type="STRING" id="8364.ENSXETP00000041966"/>
<dbReference type="PaxDb" id="8364-ENSXETP00000054273"/>
<dbReference type="GeneID" id="733545"/>
<dbReference type="KEGG" id="xtr:733545"/>
<dbReference type="AGR" id="Xenbase:XB-GENE-5730849"/>
<dbReference type="CTD" id="203547"/>
<dbReference type="Xenbase" id="XB-GENE-5730849">
    <property type="gene designation" value="vma21"/>
</dbReference>
<dbReference type="eggNOG" id="KOG4783">
    <property type="taxonomic scope" value="Eukaryota"/>
</dbReference>
<dbReference type="HOGENOM" id="CLU_143588_1_0_1"/>
<dbReference type="InParanoid" id="Q28GR4"/>
<dbReference type="OMA" id="PYFRGNE"/>
<dbReference type="OrthoDB" id="160405at2759"/>
<dbReference type="PhylomeDB" id="Q28GR4"/>
<dbReference type="TreeFam" id="TF314021"/>
<dbReference type="Proteomes" id="UP000008143">
    <property type="component" value="Chromosome 8"/>
</dbReference>
<dbReference type="Bgee" id="ENSXETG00000025460">
    <property type="expression patterns" value="Expressed in egg cell and 12 other cell types or tissues"/>
</dbReference>
<dbReference type="GO" id="GO:0005789">
    <property type="term" value="C:endoplasmic reticulum membrane"/>
    <property type="evidence" value="ECO:0007669"/>
    <property type="project" value="UniProtKB-SubCell"/>
</dbReference>
<dbReference type="GO" id="GO:0033116">
    <property type="term" value="C:endoplasmic reticulum-Golgi intermediate compartment membrane"/>
    <property type="evidence" value="ECO:0007669"/>
    <property type="project" value="UniProtKB-SubCell"/>
</dbReference>
<dbReference type="GO" id="GO:0012507">
    <property type="term" value="C:ER to Golgi transport vesicle membrane"/>
    <property type="evidence" value="ECO:0007669"/>
    <property type="project" value="UniProtKB-SubCell"/>
</dbReference>
<dbReference type="GO" id="GO:0070072">
    <property type="term" value="P:vacuolar proton-transporting V-type ATPase complex assembly"/>
    <property type="evidence" value="ECO:0007669"/>
    <property type="project" value="UniProtKB-UniRule"/>
</dbReference>
<dbReference type="HAMAP" id="MF_03058">
    <property type="entry name" value="VMA21"/>
    <property type="match status" value="1"/>
</dbReference>
<dbReference type="InterPro" id="IPR019013">
    <property type="entry name" value="Vma21"/>
</dbReference>
<dbReference type="PANTHER" id="PTHR31792">
    <property type="entry name" value="VACUOLAR ATPASE ASSEMBLY INTEGRAL MEMBRANE PROTEIN VMA21"/>
    <property type="match status" value="1"/>
</dbReference>
<dbReference type="PANTHER" id="PTHR31792:SF3">
    <property type="entry name" value="VACUOLAR ATPASE ASSEMBLY INTEGRAL MEMBRANE PROTEIN VMA21"/>
    <property type="match status" value="1"/>
</dbReference>
<dbReference type="Pfam" id="PF09446">
    <property type="entry name" value="VMA21"/>
    <property type="match status" value="1"/>
</dbReference>
<accession>Q28GR4</accession>
<organism>
    <name type="scientific">Xenopus tropicalis</name>
    <name type="common">Western clawed frog</name>
    <name type="synonym">Silurana tropicalis</name>
    <dbReference type="NCBI Taxonomy" id="8364"/>
    <lineage>
        <taxon>Eukaryota</taxon>
        <taxon>Metazoa</taxon>
        <taxon>Chordata</taxon>
        <taxon>Craniata</taxon>
        <taxon>Vertebrata</taxon>
        <taxon>Euteleostomi</taxon>
        <taxon>Amphibia</taxon>
        <taxon>Batrachia</taxon>
        <taxon>Anura</taxon>
        <taxon>Pipoidea</taxon>
        <taxon>Pipidae</taxon>
        <taxon>Xenopodinae</taxon>
        <taxon>Xenopus</taxon>
        <taxon>Silurana</taxon>
    </lineage>
</organism>
<protein>
    <recommendedName>
        <fullName evidence="1">Vacuolar ATPase assembly integral membrane protein vma21</fullName>
    </recommendedName>
</protein>
<feature type="chain" id="PRO_0000331504" description="Vacuolar ATPase assembly integral membrane protein vma21">
    <location>
        <begin position="1"/>
        <end position="104"/>
    </location>
</feature>
<feature type="topological domain" description="Cytoplasmic" evidence="1">
    <location>
        <begin position="1"/>
        <end position="25"/>
    </location>
</feature>
<feature type="transmembrane region" description="Helical" evidence="1">
    <location>
        <begin position="26"/>
        <end position="46"/>
    </location>
</feature>
<feature type="topological domain" description="Lumenal" evidence="1">
    <location>
        <begin position="47"/>
        <end position="68"/>
    </location>
</feature>
<feature type="transmembrane region" description="Helical" evidence="1">
    <location>
        <begin position="69"/>
        <end position="89"/>
    </location>
</feature>
<feature type="topological domain" description="Cytoplasmic" evidence="1">
    <location>
        <begin position="90"/>
        <end position="104"/>
    </location>
</feature>